<reference key="1">
    <citation type="journal article" date="2007" name="PLoS ONE">
        <title>A glimpse of streptococcal toxic shock syndrome from comparative genomics of S. suis 2 Chinese isolates.</title>
        <authorList>
            <person name="Chen C."/>
            <person name="Tang J."/>
            <person name="Dong W."/>
            <person name="Wang C."/>
            <person name="Feng Y."/>
            <person name="Wang J."/>
            <person name="Zheng F."/>
            <person name="Pan X."/>
            <person name="Liu D."/>
            <person name="Li M."/>
            <person name="Song Y."/>
            <person name="Zhu X."/>
            <person name="Sun H."/>
            <person name="Feng T."/>
            <person name="Guo Z."/>
            <person name="Ju A."/>
            <person name="Ge J."/>
            <person name="Dong Y."/>
            <person name="Sun W."/>
            <person name="Jiang Y."/>
            <person name="Wang J."/>
            <person name="Yan J."/>
            <person name="Yang H."/>
            <person name="Wang X."/>
            <person name="Gao G.F."/>
            <person name="Yang R."/>
            <person name="Wang J."/>
            <person name="Yu J."/>
        </authorList>
    </citation>
    <scope>NUCLEOTIDE SEQUENCE [LARGE SCALE GENOMIC DNA]</scope>
    <source>
        <strain>98HAH33</strain>
    </source>
</reference>
<keyword id="KW-0131">Cell cycle</keyword>
<keyword id="KW-0132">Cell division</keyword>
<keyword id="KW-1003">Cell membrane</keyword>
<keyword id="KW-0175">Coiled coil</keyword>
<keyword id="KW-0472">Membrane</keyword>
<keyword id="KW-0717">Septation</keyword>
<keyword id="KW-0812">Transmembrane</keyword>
<keyword id="KW-1133">Transmembrane helix</keyword>
<feature type="chain" id="PRO_1000045913" description="Septation ring formation regulator EzrA">
    <location>
        <begin position="1"/>
        <end position="574"/>
    </location>
</feature>
<feature type="topological domain" description="Extracellular" evidence="1">
    <location>
        <begin position="1"/>
        <end position="7"/>
    </location>
</feature>
<feature type="transmembrane region" description="Helical" evidence="1">
    <location>
        <begin position="8"/>
        <end position="26"/>
    </location>
</feature>
<feature type="topological domain" description="Cytoplasmic" evidence="1">
    <location>
        <begin position="27"/>
        <end position="574"/>
    </location>
</feature>
<feature type="coiled-coil region" evidence="1">
    <location>
        <begin position="105"/>
        <end position="189"/>
    </location>
</feature>
<dbReference type="EMBL" id="CP000408">
    <property type="protein sequence ID" value="ABP92677.1"/>
    <property type="molecule type" value="Genomic_DNA"/>
</dbReference>
<dbReference type="SMR" id="A4W2T8"/>
<dbReference type="KEGG" id="ssv:SSU98_1519"/>
<dbReference type="HOGENOM" id="CLU_034079_2_0_9"/>
<dbReference type="GO" id="GO:0005886">
    <property type="term" value="C:plasma membrane"/>
    <property type="evidence" value="ECO:0007669"/>
    <property type="project" value="UniProtKB-SubCell"/>
</dbReference>
<dbReference type="GO" id="GO:0005940">
    <property type="term" value="C:septin ring"/>
    <property type="evidence" value="ECO:0007669"/>
    <property type="project" value="InterPro"/>
</dbReference>
<dbReference type="GO" id="GO:0000917">
    <property type="term" value="P:division septum assembly"/>
    <property type="evidence" value="ECO:0007669"/>
    <property type="project" value="UniProtKB-KW"/>
</dbReference>
<dbReference type="GO" id="GO:0000921">
    <property type="term" value="P:septin ring assembly"/>
    <property type="evidence" value="ECO:0007669"/>
    <property type="project" value="InterPro"/>
</dbReference>
<dbReference type="HAMAP" id="MF_00728">
    <property type="entry name" value="EzrA"/>
    <property type="match status" value="1"/>
</dbReference>
<dbReference type="InterPro" id="IPR010379">
    <property type="entry name" value="EzrA"/>
</dbReference>
<dbReference type="NCBIfam" id="NF003410">
    <property type="entry name" value="PRK04778.1-4"/>
    <property type="match status" value="1"/>
</dbReference>
<dbReference type="Pfam" id="PF06160">
    <property type="entry name" value="EzrA"/>
    <property type="match status" value="1"/>
</dbReference>
<name>EZRA_STRS2</name>
<proteinExistence type="inferred from homology"/>
<comment type="function">
    <text evidence="1">Negative regulator of FtsZ ring formation; modulates the frequency and position of FtsZ ring formation. Inhibits FtsZ ring formation at polar sites. Interacts either with FtsZ or with one of its binding partners to promote depolymerization.</text>
</comment>
<comment type="subcellular location">
    <subcellularLocation>
        <location evidence="1">Cell membrane</location>
        <topology evidence="1">Single-pass membrane protein</topology>
    </subcellularLocation>
    <text evidence="1">Colocalized with FtsZ to the nascent septal site.</text>
</comment>
<comment type="similarity">
    <text evidence="1">Belongs to the EzrA family.</text>
</comment>
<evidence type="ECO:0000255" key="1">
    <source>
        <dbReference type="HAMAP-Rule" id="MF_00728"/>
    </source>
</evidence>
<accession>A4W2T8</accession>
<sequence length="574" mass="66448">MPTGTIILIVSIVIILIIAYVACLIVRKRNDNLLVALEERKEELFNLPVNEEVETVKALHLIGQSQVSFREWNQKWVDLSLNSFADIENHIFEAEGYNNAFRFVSAKNAIDSIDSQIDLIEEDIASIRQGLMELKEQEEKNSGRVKHALNLFDSLQEAVRENPDSYGETLSELEKQLKNIEVEFSEFVMLNSSGDPIEASEILDKTEEHMIALNQIMDRIPSLIERVTKDFPEQLEDLESGYRKLVEQNYLFTEANIESQFQNIRVSIRENTALIVSFDLDAAEAENEGIQAKIDHLYKVFNREIEANKEAVKISKNLPKFLEHVVQNTQLLDEESQRLNATYLLADSKLSRINQLKARLESIEIVVTESVEDIENPQVAYSILEERLDHSLASLKEIEEEQLVLADYLKSQELSENTARKKATLYINKLHTLKRYMEKRNLPGIPAEFLTNFFRTSDHVEALIAELDYKRINIEVVNRMLENATYDMNQLEELAYLIVQNATLTEQLLQYSNRYRSFDESVQKAFNRSLSIFEKDFDYQAAFEEISFALETVEPGVTERFVRSYEKTREAIRY</sequence>
<organism>
    <name type="scientific">Streptococcus suis (strain 98HAH33)</name>
    <dbReference type="NCBI Taxonomy" id="391296"/>
    <lineage>
        <taxon>Bacteria</taxon>
        <taxon>Bacillati</taxon>
        <taxon>Bacillota</taxon>
        <taxon>Bacilli</taxon>
        <taxon>Lactobacillales</taxon>
        <taxon>Streptococcaceae</taxon>
        <taxon>Streptococcus</taxon>
    </lineage>
</organism>
<gene>
    <name evidence="1" type="primary">ezrA</name>
    <name type="ordered locus">SSU98_1519</name>
</gene>
<protein>
    <recommendedName>
        <fullName evidence="1">Septation ring formation regulator EzrA</fullName>
    </recommendedName>
</protein>